<organism>
    <name type="scientific">Rickettsia rickettsii (strain Sheila Smith)</name>
    <dbReference type="NCBI Taxonomy" id="392021"/>
    <lineage>
        <taxon>Bacteria</taxon>
        <taxon>Pseudomonadati</taxon>
        <taxon>Pseudomonadota</taxon>
        <taxon>Alphaproteobacteria</taxon>
        <taxon>Rickettsiales</taxon>
        <taxon>Rickettsiaceae</taxon>
        <taxon>Rickettsieae</taxon>
        <taxon>Rickettsia</taxon>
        <taxon>spotted fever group</taxon>
    </lineage>
</organism>
<name>ATPA_RICRS</name>
<sequence>MKLKPIEVAEILQKEIANINCLSELEEVGQVITVGDGIAQIYGLANVKSGEVVEFKSGVKGLVLNLENDSVGVVIMGDDNQVQQGDNVKRTKEVLEVPVGKALLGRVVDALGNPIDGKGDIASKEYRHIEMKAPGIIERTSVSEPVQTGIKAIDSLIPIGRGQRELIIGDRQTGKTAIAVDTIINQKQAHSLTNESDKIYCIYVAIGQKRSSVAQIVKKLEDAGAMDYTLIVSATASEAAALQFIAPYSACSMGEYFRDNGMHALIIYDDLSKHAVAYRQISLLLRRPPGREAYPGDVFYLHSRLLERAAKMSEEKGSGSLTALPIIETQAGDVSAYIPTNVISITDGQIFLESELFYKGVRPAVNVGISVSRVGSAAQIKAMKQVAGSVKLELAQFRELESFSQFGSDLDPATKAQIDHGKRLVEILKQAQYNPFPVEEQIVSIYVGTKKYLNDVPLQKVKEFEDKMLTEIRLNKKDILESIKNEQCITEETEQKLKAFLENFVKEFVK</sequence>
<dbReference type="EC" id="7.1.2.2" evidence="1"/>
<dbReference type="EMBL" id="CP000848">
    <property type="protein sequence ID" value="ABV76803.1"/>
    <property type="molecule type" value="Genomic_DNA"/>
</dbReference>
<dbReference type="RefSeq" id="WP_012151345.1">
    <property type="nucleotide sequence ID" value="NZ_CP121767.1"/>
</dbReference>
<dbReference type="SMR" id="A8GTS8"/>
<dbReference type="GeneID" id="79937847"/>
<dbReference type="KEGG" id="rri:A1G_06770"/>
<dbReference type="HOGENOM" id="CLU_010091_2_1_5"/>
<dbReference type="Proteomes" id="UP000006832">
    <property type="component" value="Chromosome"/>
</dbReference>
<dbReference type="GO" id="GO:0005886">
    <property type="term" value="C:plasma membrane"/>
    <property type="evidence" value="ECO:0007669"/>
    <property type="project" value="UniProtKB-SubCell"/>
</dbReference>
<dbReference type="GO" id="GO:0045259">
    <property type="term" value="C:proton-transporting ATP synthase complex"/>
    <property type="evidence" value="ECO:0007669"/>
    <property type="project" value="UniProtKB-KW"/>
</dbReference>
<dbReference type="GO" id="GO:0043531">
    <property type="term" value="F:ADP binding"/>
    <property type="evidence" value="ECO:0007669"/>
    <property type="project" value="TreeGrafter"/>
</dbReference>
<dbReference type="GO" id="GO:0005524">
    <property type="term" value="F:ATP binding"/>
    <property type="evidence" value="ECO:0007669"/>
    <property type="project" value="UniProtKB-UniRule"/>
</dbReference>
<dbReference type="GO" id="GO:0046933">
    <property type="term" value="F:proton-transporting ATP synthase activity, rotational mechanism"/>
    <property type="evidence" value="ECO:0007669"/>
    <property type="project" value="UniProtKB-UniRule"/>
</dbReference>
<dbReference type="CDD" id="cd18113">
    <property type="entry name" value="ATP-synt_F1_alpha_C"/>
    <property type="match status" value="1"/>
</dbReference>
<dbReference type="CDD" id="cd18116">
    <property type="entry name" value="ATP-synt_F1_alpha_N"/>
    <property type="match status" value="1"/>
</dbReference>
<dbReference type="CDD" id="cd01132">
    <property type="entry name" value="F1-ATPase_alpha_CD"/>
    <property type="match status" value="1"/>
</dbReference>
<dbReference type="FunFam" id="1.20.150.20:FF:000001">
    <property type="entry name" value="ATP synthase subunit alpha"/>
    <property type="match status" value="1"/>
</dbReference>
<dbReference type="FunFam" id="2.40.30.20:FF:000001">
    <property type="entry name" value="ATP synthase subunit alpha"/>
    <property type="match status" value="1"/>
</dbReference>
<dbReference type="FunFam" id="3.40.50.300:FF:002432">
    <property type="entry name" value="ATP synthase subunit alpha, mitochondrial"/>
    <property type="match status" value="1"/>
</dbReference>
<dbReference type="Gene3D" id="2.40.30.20">
    <property type="match status" value="1"/>
</dbReference>
<dbReference type="Gene3D" id="1.20.150.20">
    <property type="entry name" value="ATP synthase alpha/beta chain, C-terminal domain"/>
    <property type="match status" value="1"/>
</dbReference>
<dbReference type="Gene3D" id="3.40.50.300">
    <property type="entry name" value="P-loop containing nucleotide triphosphate hydrolases"/>
    <property type="match status" value="1"/>
</dbReference>
<dbReference type="HAMAP" id="MF_01346">
    <property type="entry name" value="ATP_synth_alpha_bact"/>
    <property type="match status" value="1"/>
</dbReference>
<dbReference type="InterPro" id="IPR023366">
    <property type="entry name" value="ATP_synth_asu-like_sf"/>
</dbReference>
<dbReference type="InterPro" id="IPR000793">
    <property type="entry name" value="ATP_synth_asu_C"/>
</dbReference>
<dbReference type="InterPro" id="IPR038376">
    <property type="entry name" value="ATP_synth_asu_C_sf"/>
</dbReference>
<dbReference type="InterPro" id="IPR033732">
    <property type="entry name" value="ATP_synth_F1_a_nt-bd_dom"/>
</dbReference>
<dbReference type="InterPro" id="IPR005294">
    <property type="entry name" value="ATP_synth_F1_asu"/>
</dbReference>
<dbReference type="InterPro" id="IPR020003">
    <property type="entry name" value="ATPase_a/bsu_AS"/>
</dbReference>
<dbReference type="InterPro" id="IPR004100">
    <property type="entry name" value="ATPase_F1/V1/A1_a/bsu_N"/>
</dbReference>
<dbReference type="InterPro" id="IPR036121">
    <property type="entry name" value="ATPase_F1/V1/A1_a/bsu_N_sf"/>
</dbReference>
<dbReference type="InterPro" id="IPR000194">
    <property type="entry name" value="ATPase_F1/V1/A1_a/bsu_nucl-bd"/>
</dbReference>
<dbReference type="InterPro" id="IPR027417">
    <property type="entry name" value="P-loop_NTPase"/>
</dbReference>
<dbReference type="NCBIfam" id="TIGR00962">
    <property type="entry name" value="atpA"/>
    <property type="match status" value="1"/>
</dbReference>
<dbReference type="NCBIfam" id="NF009884">
    <property type="entry name" value="PRK13343.1"/>
    <property type="match status" value="1"/>
</dbReference>
<dbReference type="PANTHER" id="PTHR48082">
    <property type="entry name" value="ATP SYNTHASE SUBUNIT ALPHA, MITOCHONDRIAL"/>
    <property type="match status" value="1"/>
</dbReference>
<dbReference type="PANTHER" id="PTHR48082:SF2">
    <property type="entry name" value="ATP SYNTHASE SUBUNIT ALPHA, MITOCHONDRIAL"/>
    <property type="match status" value="1"/>
</dbReference>
<dbReference type="Pfam" id="PF00006">
    <property type="entry name" value="ATP-synt_ab"/>
    <property type="match status" value="1"/>
</dbReference>
<dbReference type="Pfam" id="PF00306">
    <property type="entry name" value="ATP-synt_ab_C"/>
    <property type="match status" value="1"/>
</dbReference>
<dbReference type="Pfam" id="PF02874">
    <property type="entry name" value="ATP-synt_ab_N"/>
    <property type="match status" value="1"/>
</dbReference>
<dbReference type="PIRSF" id="PIRSF039088">
    <property type="entry name" value="F_ATPase_subunit_alpha"/>
    <property type="match status" value="1"/>
</dbReference>
<dbReference type="SUPFAM" id="SSF47917">
    <property type="entry name" value="C-terminal domain of alpha and beta subunits of F1 ATP synthase"/>
    <property type="match status" value="1"/>
</dbReference>
<dbReference type="SUPFAM" id="SSF50615">
    <property type="entry name" value="N-terminal domain of alpha and beta subunits of F1 ATP synthase"/>
    <property type="match status" value="1"/>
</dbReference>
<dbReference type="SUPFAM" id="SSF52540">
    <property type="entry name" value="P-loop containing nucleoside triphosphate hydrolases"/>
    <property type="match status" value="1"/>
</dbReference>
<dbReference type="PROSITE" id="PS00152">
    <property type="entry name" value="ATPASE_ALPHA_BETA"/>
    <property type="match status" value="1"/>
</dbReference>
<keyword id="KW-0066">ATP synthesis</keyword>
<keyword id="KW-0067">ATP-binding</keyword>
<keyword id="KW-0997">Cell inner membrane</keyword>
<keyword id="KW-1003">Cell membrane</keyword>
<keyword id="KW-0139">CF(1)</keyword>
<keyword id="KW-0375">Hydrogen ion transport</keyword>
<keyword id="KW-0406">Ion transport</keyword>
<keyword id="KW-0472">Membrane</keyword>
<keyword id="KW-0547">Nucleotide-binding</keyword>
<keyword id="KW-1278">Translocase</keyword>
<keyword id="KW-0813">Transport</keyword>
<protein>
    <recommendedName>
        <fullName evidence="1">ATP synthase subunit alpha</fullName>
        <ecNumber evidence="1">7.1.2.2</ecNumber>
    </recommendedName>
    <alternativeName>
        <fullName evidence="1">ATP synthase F1 sector subunit alpha</fullName>
    </alternativeName>
    <alternativeName>
        <fullName evidence="1">F-ATPase subunit alpha</fullName>
    </alternativeName>
</protein>
<proteinExistence type="inferred from homology"/>
<reference key="1">
    <citation type="submission" date="2007-09" db="EMBL/GenBank/DDBJ databases">
        <title>Complete genome sequence of Rickettsia rickettsii.</title>
        <authorList>
            <person name="Madan A."/>
            <person name="Fahey J."/>
            <person name="Helton E."/>
            <person name="Ketteman M."/>
            <person name="Madan A."/>
            <person name="Rodrigues S."/>
            <person name="Sanchez A."/>
            <person name="Dasch G."/>
            <person name="Eremeeva M."/>
        </authorList>
    </citation>
    <scope>NUCLEOTIDE SEQUENCE [LARGE SCALE GENOMIC DNA]</scope>
    <source>
        <strain>Sheila Smith</strain>
    </source>
</reference>
<gene>
    <name evidence="1" type="primary">atpA</name>
    <name type="ordered locus">A1G_06770</name>
</gene>
<evidence type="ECO:0000255" key="1">
    <source>
        <dbReference type="HAMAP-Rule" id="MF_01346"/>
    </source>
</evidence>
<feature type="chain" id="PRO_1000055079" description="ATP synthase subunit alpha">
    <location>
        <begin position="1"/>
        <end position="510"/>
    </location>
</feature>
<feature type="binding site" evidence="1">
    <location>
        <begin position="169"/>
        <end position="176"/>
    </location>
    <ligand>
        <name>ATP</name>
        <dbReference type="ChEBI" id="CHEBI:30616"/>
    </ligand>
</feature>
<feature type="site" description="Required for activity" evidence="1">
    <location>
        <position position="370"/>
    </location>
</feature>
<accession>A8GTS8</accession>
<comment type="function">
    <text evidence="1">Produces ATP from ADP in the presence of a proton gradient across the membrane. The alpha chain is a regulatory subunit.</text>
</comment>
<comment type="catalytic activity">
    <reaction evidence="1">
        <text>ATP + H2O + 4 H(+)(in) = ADP + phosphate + 5 H(+)(out)</text>
        <dbReference type="Rhea" id="RHEA:57720"/>
        <dbReference type="ChEBI" id="CHEBI:15377"/>
        <dbReference type="ChEBI" id="CHEBI:15378"/>
        <dbReference type="ChEBI" id="CHEBI:30616"/>
        <dbReference type="ChEBI" id="CHEBI:43474"/>
        <dbReference type="ChEBI" id="CHEBI:456216"/>
        <dbReference type="EC" id="7.1.2.2"/>
    </reaction>
</comment>
<comment type="subunit">
    <text evidence="1">F-type ATPases have 2 components, CF(1) - the catalytic core - and CF(0) - the membrane proton channel. CF(1) has five subunits: alpha(3), beta(3), gamma(1), delta(1), epsilon(1). CF(0) has three main subunits: a(1), b(2) and c(9-12). The alpha and beta chains form an alternating ring which encloses part of the gamma chain. CF(1) is attached to CF(0) by a central stalk formed by the gamma and epsilon chains, while a peripheral stalk is formed by the delta and b chains.</text>
</comment>
<comment type="subcellular location">
    <subcellularLocation>
        <location evidence="1">Cell inner membrane</location>
        <topology evidence="1">Peripheral membrane protein</topology>
    </subcellularLocation>
</comment>
<comment type="similarity">
    <text evidence="1">Belongs to the ATPase alpha/beta chains family.</text>
</comment>